<keyword id="KW-0963">Cytoplasm</keyword>
<keyword id="KW-0251">Elongation factor</keyword>
<keyword id="KW-0342">GTP-binding</keyword>
<keyword id="KW-0378">Hydrolase</keyword>
<keyword id="KW-0460">Magnesium</keyword>
<keyword id="KW-0479">Metal-binding</keyword>
<keyword id="KW-0547">Nucleotide-binding</keyword>
<keyword id="KW-0648">Protein biosynthesis</keyword>
<organism>
    <name type="scientific">Staphylococcus epidermidis (strain ATCC 12228 / FDA PCI 1200)</name>
    <dbReference type="NCBI Taxonomy" id="176280"/>
    <lineage>
        <taxon>Bacteria</taxon>
        <taxon>Bacillati</taxon>
        <taxon>Bacillota</taxon>
        <taxon>Bacilli</taxon>
        <taxon>Bacillales</taxon>
        <taxon>Staphylococcaceae</taxon>
        <taxon>Staphylococcus</taxon>
    </lineage>
</organism>
<dbReference type="EC" id="3.6.5.3" evidence="2"/>
<dbReference type="EMBL" id="AE015929">
    <property type="protein sequence ID" value="AAO03909.1"/>
    <property type="molecule type" value="Genomic_DNA"/>
</dbReference>
<dbReference type="RefSeq" id="NP_763867.1">
    <property type="nucleotide sequence ID" value="NC_004461.1"/>
</dbReference>
<dbReference type="RefSeq" id="WP_001832289.1">
    <property type="nucleotide sequence ID" value="NZ_WBME01000014.1"/>
</dbReference>
<dbReference type="SMR" id="Q8CQ81"/>
<dbReference type="GeneID" id="50019523"/>
<dbReference type="KEGG" id="sep:SE_0312"/>
<dbReference type="PATRIC" id="fig|176280.10.peg.287"/>
<dbReference type="eggNOG" id="COG0050">
    <property type="taxonomic scope" value="Bacteria"/>
</dbReference>
<dbReference type="HOGENOM" id="CLU_007265_0_0_9"/>
<dbReference type="OrthoDB" id="9804504at2"/>
<dbReference type="Proteomes" id="UP000001411">
    <property type="component" value="Chromosome"/>
</dbReference>
<dbReference type="GO" id="GO:0005829">
    <property type="term" value="C:cytosol"/>
    <property type="evidence" value="ECO:0007669"/>
    <property type="project" value="TreeGrafter"/>
</dbReference>
<dbReference type="GO" id="GO:0005525">
    <property type="term" value="F:GTP binding"/>
    <property type="evidence" value="ECO:0007669"/>
    <property type="project" value="UniProtKB-UniRule"/>
</dbReference>
<dbReference type="GO" id="GO:0003924">
    <property type="term" value="F:GTPase activity"/>
    <property type="evidence" value="ECO:0007669"/>
    <property type="project" value="InterPro"/>
</dbReference>
<dbReference type="GO" id="GO:0003746">
    <property type="term" value="F:translation elongation factor activity"/>
    <property type="evidence" value="ECO:0007669"/>
    <property type="project" value="UniProtKB-UniRule"/>
</dbReference>
<dbReference type="CDD" id="cd01884">
    <property type="entry name" value="EF_Tu"/>
    <property type="match status" value="1"/>
</dbReference>
<dbReference type="CDD" id="cd03697">
    <property type="entry name" value="EFTU_II"/>
    <property type="match status" value="1"/>
</dbReference>
<dbReference type="CDD" id="cd03707">
    <property type="entry name" value="EFTU_III"/>
    <property type="match status" value="1"/>
</dbReference>
<dbReference type="FunFam" id="2.40.30.10:FF:000001">
    <property type="entry name" value="Elongation factor Tu"/>
    <property type="match status" value="1"/>
</dbReference>
<dbReference type="FunFam" id="3.40.50.300:FF:000003">
    <property type="entry name" value="Elongation factor Tu"/>
    <property type="match status" value="1"/>
</dbReference>
<dbReference type="Gene3D" id="3.40.50.300">
    <property type="entry name" value="P-loop containing nucleotide triphosphate hydrolases"/>
    <property type="match status" value="1"/>
</dbReference>
<dbReference type="Gene3D" id="2.40.30.10">
    <property type="entry name" value="Translation factors"/>
    <property type="match status" value="2"/>
</dbReference>
<dbReference type="HAMAP" id="MF_00118_B">
    <property type="entry name" value="EF_Tu_B"/>
    <property type="match status" value="1"/>
</dbReference>
<dbReference type="InterPro" id="IPR041709">
    <property type="entry name" value="EF-Tu_GTP-bd"/>
</dbReference>
<dbReference type="InterPro" id="IPR050055">
    <property type="entry name" value="EF-Tu_GTPase"/>
</dbReference>
<dbReference type="InterPro" id="IPR004161">
    <property type="entry name" value="EFTu-like_2"/>
</dbReference>
<dbReference type="InterPro" id="IPR033720">
    <property type="entry name" value="EFTU_2"/>
</dbReference>
<dbReference type="InterPro" id="IPR031157">
    <property type="entry name" value="G_TR_CS"/>
</dbReference>
<dbReference type="InterPro" id="IPR027417">
    <property type="entry name" value="P-loop_NTPase"/>
</dbReference>
<dbReference type="InterPro" id="IPR005225">
    <property type="entry name" value="Small_GTP-bd"/>
</dbReference>
<dbReference type="InterPro" id="IPR000795">
    <property type="entry name" value="T_Tr_GTP-bd_dom"/>
</dbReference>
<dbReference type="InterPro" id="IPR009000">
    <property type="entry name" value="Transl_B-barrel_sf"/>
</dbReference>
<dbReference type="InterPro" id="IPR009001">
    <property type="entry name" value="Transl_elong_EF1A/Init_IF2_C"/>
</dbReference>
<dbReference type="InterPro" id="IPR004541">
    <property type="entry name" value="Transl_elong_EFTu/EF1A_bac/org"/>
</dbReference>
<dbReference type="InterPro" id="IPR004160">
    <property type="entry name" value="Transl_elong_EFTu/EF1A_C"/>
</dbReference>
<dbReference type="NCBIfam" id="TIGR00485">
    <property type="entry name" value="EF-Tu"/>
    <property type="match status" value="1"/>
</dbReference>
<dbReference type="NCBIfam" id="NF000766">
    <property type="entry name" value="PRK00049.1"/>
    <property type="match status" value="1"/>
</dbReference>
<dbReference type="NCBIfam" id="NF009372">
    <property type="entry name" value="PRK12735.1"/>
    <property type="match status" value="1"/>
</dbReference>
<dbReference type="NCBIfam" id="NF009373">
    <property type="entry name" value="PRK12736.1"/>
    <property type="match status" value="1"/>
</dbReference>
<dbReference type="NCBIfam" id="TIGR00231">
    <property type="entry name" value="small_GTP"/>
    <property type="match status" value="1"/>
</dbReference>
<dbReference type="PANTHER" id="PTHR43721:SF22">
    <property type="entry name" value="ELONGATION FACTOR TU, MITOCHONDRIAL"/>
    <property type="match status" value="1"/>
</dbReference>
<dbReference type="PANTHER" id="PTHR43721">
    <property type="entry name" value="ELONGATION FACTOR TU-RELATED"/>
    <property type="match status" value="1"/>
</dbReference>
<dbReference type="Pfam" id="PF00009">
    <property type="entry name" value="GTP_EFTU"/>
    <property type="match status" value="1"/>
</dbReference>
<dbReference type="Pfam" id="PF03144">
    <property type="entry name" value="GTP_EFTU_D2"/>
    <property type="match status" value="1"/>
</dbReference>
<dbReference type="Pfam" id="PF03143">
    <property type="entry name" value="GTP_EFTU_D3"/>
    <property type="match status" value="1"/>
</dbReference>
<dbReference type="PRINTS" id="PR00315">
    <property type="entry name" value="ELONGATNFCT"/>
</dbReference>
<dbReference type="SUPFAM" id="SSF50465">
    <property type="entry name" value="EF-Tu/eEF-1alpha/eIF2-gamma C-terminal domain"/>
    <property type="match status" value="1"/>
</dbReference>
<dbReference type="SUPFAM" id="SSF52540">
    <property type="entry name" value="P-loop containing nucleoside triphosphate hydrolases"/>
    <property type="match status" value="1"/>
</dbReference>
<dbReference type="SUPFAM" id="SSF50447">
    <property type="entry name" value="Translation proteins"/>
    <property type="match status" value="1"/>
</dbReference>
<dbReference type="PROSITE" id="PS00301">
    <property type="entry name" value="G_TR_1"/>
    <property type="match status" value="1"/>
</dbReference>
<dbReference type="PROSITE" id="PS51722">
    <property type="entry name" value="G_TR_2"/>
    <property type="match status" value="1"/>
</dbReference>
<comment type="function">
    <text evidence="2">GTP hydrolase that promotes the GTP-dependent binding of aminoacyl-tRNA to the A-site of ribosomes during protein biosynthesis.</text>
</comment>
<comment type="catalytic activity">
    <reaction evidence="2">
        <text>GTP + H2O = GDP + phosphate + H(+)</text>
        <dbReference type="Rhea" id="RHEA:19669"/>
        <dbReference type="ChEBI" id="CHEBI:15377"/>
        <dbReference type="ChEBI" id="CHEBI:15378"/>
        <dbReference type="ChEBI" id="CHEBI:37565"/>
        <dbReference type="ChEBI" id="CHEBI:43474"/>
        <dbReference type="ChEBI" id="CHEBI:58189"/>
        <dbReference type="EC" id="3.6.5.3"/>
    </reaction>
    <physiologicalReaction direction="left-to-right" evidence="2">
        <dbReference type="Rhea" id="RHEA:19670"/>
    </physiologicalReaction>
</comment>
<comment type="subunit">
    <text evidence="2">Monomer.</text>
</comment>
<comment type="subcellular location">
    <subcellularLocation>
        <location evidence="2">Cytoplasm</location>
    </subcellularLocation>
</comment>
<comment type="similarity">
    <text evidence="2">Belongs to the TRAFAC class translation factor GTPase superfamily. Classic translation factor GTPase family. EF-Tu/EF-1A subfamily.</text>
</comment>
<gene>
    <name evidence="2" type="primary">tuf</name>
    <name type="ordered locus">SE_0312</name>
</gene>
<proteinExistence type="inferred from homology"/>
<protein>
    <recommendedName>
        <fullName evidence="2">Elongation factor Tu</fullName>
        <shortName evidence="2">EF-Tu</shortName>
        <ecNumber evidence="2">3.6.5.3</ecNumber>
    </recommendedName>
</protein>
<reference key="1">
    <citation type="journal article" date="2003" name="Mol. Microbiol.">
        <title>Genome-based analysis of virulence genes in a non-biofilm-forming Staphylococcus epidermidis strain (ATCC 12228).</title>
        <authorList>
            <person name="Zhang Y.-Q."/>
            <person name="Ren S.-X."/>
            <person name="Li H.-L."/>
            <person name="Wang Y.-X."/>
            <person name="Fu G."/>
            <person name="Yang J."/>
            <person name="Qin Z.-Q."/>
            <person name="Miao Y.-G."/>
            <person name="Wang W.-Y."/>
            <person name="Chen R.-S."/>
            <person name="Shen Y."/>
            <person name="Chen Z."/>
            <person name="Yuan Z.-H."/>
            <person name="Zhao G.-P."/>
            <person name="Qu D."/>
            <person name="Danchin A."/>
            <person name="Wen Y.-M."/>
        </authorList>
    </citation>
    <scope>NUCLEOTIDE SEQUENCE [LARGE SCALE GENOMIC DNA]</scope>
    <source>
        <strain>ATCC 12228 / FDA PCI 1200</strain>
    </source>
</reference>
<accession>Q8CQ81</accession>
<feature type="chain" id="PRO_0000091395" description="Elongation factor Tu">
    <location>
        <begin position="1"/>
        <end position="394"/>
    </location>
</feature>
<feature type="domain" description="tr-type G">
    <location>
        <begin position="10"/>
        <end position="204"/>
    </location>
</feature>
<feature type="region of interest" description="G1" evidence="1">
    <location>
        <begin position="19"/>
        <end position="26"/>
    </location>
</feature>
<feature type="region of interest" description="G2" evidence="1">
    <location>
        <begin position="60"/>
        <end position="64"/>
    </location>
</feature>
<feature type="region of interest" description="G3" evidence="1">
    <location>
        <begin position="81"/>
        <end position="84"/>
    </location>
</feature>
<feature type="region of interest" description="G4" evidence="1">
    <location>
        <begin position="136"/>
        <end position="139"/>
    </location>
</feature>
<feature type="region of interest" description="G5" evidence="1">
    <location>
        <begin position="174"/>
        <end position="176"/>
    </location>
</feature>
<feature type="binding site" evidence="2">
    <location>
        <begin position="19"/>
        <end position="26"/>
    </location>
    <ligand>
        <name>GTP</name>
        <dbReference type="ChEBI" id="CHEBI:37565"/>
    </ligand>
</feature>
<feature type="binding site" evidence="2">
    <location>
        <position position="26"/>
    </location>
    <ligand>
        <name>Mg(2+)</name>
        <dbReference type="ChEBI" id="CHEBI:18420"/>
    </ligand>
</feature>
<feature type="binding site" evidence="2">
    <location>
        <begin position="81"/>
        <end position="85"/>
    </location>
    <ligand>
        <name>GTP</name>
        <dbReference type="ChEBI" id="CHEBI:37565"/>
    </ligand>
</feature>
<feature type="binding site" evidence="2">
    <location>
        <begin position="136"/>
        <end position="139"/>
    </location>
    <ligand>
        <name>GTP</name>
        <dbReference type="ChEBI" id="CHEBI:37565"/>
    </ligand>
</feature>
<sequence>MAKEKFDRSKEHANIGTIGHVDHGKTTLTAAIATVLAKNGDTVAQSYDMIDNAPEEKERGITINTAHIEYQTDKRHYAHVDCPGHADYVKNMITGAAQMDGGILVVSAADGPMPQTREHILLSRNVGVPALVVFLNKVDMVDDEELLELVEMEVRDLLSEYDFPGDDVPVIAGSALKALEGDAEYEQKILDLMQAVDDYIPTPERDSDKPFMMPVEDVFSITGRGTVATGRVERGQIKVGEEVEIIGMHETSKTTVTGVEMFRKLLDYAEAGDNIGALLRGVAREDVQRGQVLAAPGSITPHTKFKAEVYVLSKDEGGRHTPFFTNYRPQFYFRTTDVTGVVNLPEGTEMVMPGDNVEMTVELIAPIAIEDGTRFSIREGGRTVGSGVVTEIFE</sequence>
<evidence type="ECO:0000250" key="1"/>
<evidence type="ECO:0000255" key="2">
    <source>
        <dbReference type="HAMAP-Rule" id="MF_00118"/>
    </source>
</evidence>
<name>EFTU_STAES</name>